<feature type="initiator methionine" description="Removed" evidence="1">
    <location>
        <position position="1"/>
    </location>
</feature>
<feature type="chain" id="PRO_0000418522" description="Chaperone protein DnaK">
    <location>
        <begin position="2"/>
        <end position="613"/>
    </location>
</feature>
<feature type="region of interest" description="Disordered" evidence="2">
    <location>
        <begin position="578"/>
        <end position="613"/>
    </location>
</feature>
<feature type="compositionally biased region" description="Low complexity" evidence="2">
    <location>
        <begin position="578"/>
        <end position="591"/>
    </location>
</feature>
<feature type="compositionally biased region" description="Acidic residues" evidence="2">
    <location>
        <begin position="596"/>
        <end position="613"/>
    </location>
</feature>
<feature type="modified residue" description="Phosphothreonine; by autocatalysis" evidence="1">
    <location>
        <position position="173"/>
    </location>
</feature>
<feature type="sequence conflict" description="In Ref. 1; BAA82789." evidence="3" ref="1">
    <original>S</original>
    <variation>F</variation>
    <location>
        <position position="244"/>
    </location>
</feature>
<protein>
    <recommendedName>
        <fullName>Chaperone protein DnaK</fullName>
    </recommendedName>
    <alternativeName>
        <fullName>HSP70</fullName>
    </alternativeName>
    <alternativeName>
        <fullName>Heat shock 70 kDa protein</fullName>
    </alternativeName>
    <alternativeName>
        <fullName>Heat shock protein 70</fullName>
    </alternativeName>
</protein>
<organism>
    <name type="scientific">Listeria monocytogenes serotype 1/2a (strain 10403S)</name>
    <dbReference type="NCBI Taxonomy" id="393133"/>
    <lineage>
        <taxon>Bacteria</taxon>
        <taxon>Bacillati</taxon>
        <taxon>Bacillota</taxon>
        <taxon>Bacilli</taxon>
        <taxon>Bacillales</taxon>
        <taxon>Listeriaceae</taxon>
        <taxon>Listeria</taxon>
    </lineage>
</organism>
<proteinExistence type="inferred from homology"/>
<gene>
    <name type="primary">dnaK</name>
    <name type="ordered locus">LMRG_00926</name>
</gene>
<keyword id="KW-0067">ATP-binding</keyword>
<keyword id="KW-0143">Chaperone</keyword>
<keyword id="KW-0547">Nucleotide-binding</keyword>
<keyword id="KW-0597">Phosphoprotein</keyword>
<keyword id="KW-0346">Stress response</keyword>
<name>DNAK_LISM4</name>
<dbReference type="EMBL" id="AB023064">
    <property type="protein sequence ID" value="BAA82789.1"/>
    <property type="molecule type" value="Genomic_DNA"/>
</dbReference>
<dbReference type="EMBL" id="CP002002">
    <property type="protein sequence ID" value="AEO06458.1"/>
    <property type="molecule type" value="Genomic_DNA"/>
</dbReference>
<dbReference type="PIR" id="T43738">
    <property type="entry name" value="T43738"/>
</dbReference>
<dbReference type="RefSeq" id="WP_003721980.1">
    <property type="nucleotide sequence ID" value="NC_017544.1"/>
</dbReference>
<dbReference type="SMR" id="G2K046"/>
<dbReference type="KEGG" id="lmt:LMRG_00926"/>
<dbReference type="HOGENOM" id="CLU_005965_2_4_9"/>
<dbReference type="Proteomes" id="UP000001288">
    <property type="component" value="Chromosome"/>
</dbReference>
<dbReference type="GO" id="GO:0005524">
    <property type="term" value="F:ATP binding"/>
    <property type="evidence" value="ECO:0007669"/>
    <property type="project" value="UniProtKB-UniRule"/>
</dbReference>
<dbReference type="GO" id="GO:0140662">
    <property type="term" value="F:ATP-dependent protein folding chaperone"/>
    <property type="evidence" value="ECO:0007669"/>
    <property type="project" value="InterPro"/>
</dbReference>
<dbReference type="GO" id="GO:0051082">
    <property type="term" value="F:unfolded protein binding"/>
    <property type="evidence" value="ECO:0007669"/>
    <property type="project" value="InterPro"/>
</dbReference>
<dbReference type="CDD" id="cd10234">
    <property type="entry name" value="ASKHA_NBD_HSP70_DnaK-like"/>
    <property type="match status" value="1"/>
</dbReference>
<dbReference type="FunFam" id="2.60.34.10:FF:000014">
    <property type="entry name" value="Chaperone protein DnaK HSP70"/>
    <property type="match status" value="1"/>
</dbReference>
<dbReference type="FunFam" id="1.20.1270.10:FF:000001">
    <property type="entry name" value="Molecular chaperone DnaK"/>
    <property type="match status" value="1"/>
</dbReference>
<dbReference type="FunFam" id="3.30.420.40:FF:000071">
    <property type="entry name" value="Molecular chaperone DnaK"/>
    <property type="match status" value="1"/>
</dbReference>
<dbReference type="FunFam" id="3.90.640.10:FF:000003">
    <property type="entry name" value="Molecular chaperone DnaK"/>
    <property type="match status" value="1"/>
</dbReference>
<dbReference type="Gene3D" id="1.20.1270.10">
    <property type="match status" value="1"/>
</dbReference>
<dbReference type="Gene3D" id="3.30.420.40">
    <property type="match status" value="2"/>
</dbReference>
<dbReference type="Gene3D" id="3.90.640.10">
    <property type="entry name" value="Actin, Chain A, domain 4"/>
    <property type="match status" value="1"/>
</dbReference>
<dbReference type="Gene3D" id="2.60.34.10">
    <property type="entry name" value="Substrate Binding Domain Of DNAk, Chain A, domain 1"/>
    <property type="match status" value="1"/>
</dbReference>
<dbReference type="HAMAP" id="MF_00332">
    <property type="entry name" value="DnaK"/>
    <property type="match status" value="1"/>
</dbReference>
<dbReference type="InterPro" id="IPR043129">
    <property type="entry name" value="ATPase_NBD"/>
</dbReference>
<dbReference type="InterPro" id="IPR012725">
    <property type="entry name" value="Chaperone_DnaK"/>
</dbReference>
<dbReference type="InterPro" id="IPR018181">
    <property type="entry name" value="Heat_shock_70_CS"/>
</dbReference>
<dbReference type="InterPro" id="IPR029048">
    <property type="entry name" value="HSP70_C_sf"/>
</dbReference>
<dbReference type="InterPro" id="IPR029047">
    <property type="entry name" value="HSP70_peptide-bd_sf"/>
</dbReference>
<dbReference type="InterPro" id="IPR013126">
    <property type="entry name" value="Hsp_70_fam"/>
</dbReference>
<dbReference type="NCBIfam" id="NF001413">
    <property type="entry name" value="PRK00290.1"/>
    <property type="match status" value="1"/>
</dbReference>
<dbReference type="NCBIfam" id="TIGR02350">
    <property type="entry name" value="prok_dnaK"/>
    <property type="match status" value="1"/>
</dbReference>
<dbReference type="PANTHER" id="PTHR19375">
    <property type="entry name" value="HEAT SHOCK PROTEIN 70KDA"/>
    <property type="match status" value="1"/>
</dbReference>
<dbReference type="Pfam" id="PF00012">
    <property type="entry name" value="HSP70"/>
    <property type="match status" value="1"/>
</dbReference>
<dbReference type="PRINTS" id="PR00301">
    <property type="entry name" value="HEATSHOCK70"/>
</dbReference>
<dbReference type="SUPFAM" id="SSF53067">
    <property type="entry name" value="Actin-like ATPase domain"/>
    <property type="match status" value="2"/>
</dbReference>
<dbReference type="SUPFAM" id="SSF100934">
    <property type="entry name" value="Heat shock protein 70kD (HSP70), C-terminal subdomain"/>
    <property type="match status" value="1"/>
</dbReference>
<dbReference type="SUPFAM" id="SSF100920">
    <property type="entry name" value="Heat shock protein 70kD (HSP70), peptide-binding domain"/>
    <property type="match status" value="1"/>
</dbReference>
<dbReference type="PROSITE" id="PS00297">
    <property type="entry name" value="HSP70_1"/>
    <property type="match status" value="1"/>
</dbReference>
<dbReference type="PROSITE" id="PS00329">
    <property type="entry name" value="HSP70_2"/>
    <property type="match status" value="1"/>
</dbReference>
<dbReference type="PROSITE" id="PS01036">
    <property type="entry name" value="HSP70_3"/>
    <property type="match status" value="1"/>
</dbReference>
<accession>G2K046</accession>
<accession>Q9S5A4</accession>
<comment type="function">
    <text evidence="1">Acts as a chaperone.</text>
</comment>
<comment type="induction">
    <text evidence="1">By stress conditions e.g. heat shock (By similarity).</text>
</comment>
<comment type="similarity">
    <text evidence="3">Belongs to the heat shock protein 70 family.</text>
</comment>
<evidence type="ECO:0000250" key="1"/>
<evidence type="ECO:0000256" key="2">
    <source>
        <dbReference type="SAM" id="MobiDB-lite"/>
    </source>
</evidence>
<evidence type="ECO:0000305" key="3"/>
<reference key="1">
    <citation type="journal article" date="2000" name="Cell Stress Chaperones">
        <title>Cloning, sequencing, and transcriptional analysis of the dnaK heat shock operon of Listeria monocytogenes.</title>
        <authorList>
            <person name="Hanawa T."/>
            <person name="Kai M."/>
            <person name="Kamiya S."/>
            <person name="Yamamoto T."/>
        </authorList>
    </citation>
    <scope>NUCLEOTIDE SEQUENCE [GENOMIC DNA]</scope>
    <source>
        <strain>10403S</strain>
    </source>
</reference>
<reference key="2">
    <citation type="submission" date="2010-04" db="EMBL/GenBank/DDBJ databases">
        <title>The genome sequence of Listeria monocytogenes strain 10403S.</title>
        <authorList>
            <consortium name="The Broad Institute Genome Sequencing Platform"/>
            <consortium name="The Broad Institute Genome Sequencing Center for Infectious Disease"/>
            <person name="Borowsky M."/>
            <person name="Borodovsky M."/>
            <person name="Young S.K."/>
            <person name="Zeng Q."/>
            <person name="Koehrsen M."/>
            <person name="Fitzgerald M."/>
            <person name="Wiedmann M."/>
            <person name="Swaminathan B."/>
            <person name="Lauer P."/>
            <person name="Portnoy D."/>
            <person name="Cossart P."/>
            <person name="Buchrieser C."/>
            <person name="Higgins D."/>
            <person name="Abouelleil A."/>
            <person name="Alvarado L."/>
            <person name="Arachchi H.M."/>
            <person name="Berlin A."/>
            <person name="Borenstein D."/>
            <person name="Brown A."/>
            <person name="Chapman S.B."/>
            <person name="Chen Z."/>
            <person name="Dunbar C.D."/>
            <person name="Engels R."/>
            <person name="Freedman E."/>
            <person name="Gearin G."/>
            <person name="Gellesch M."/>
            <person name="Goldberg J."/>
            <person name="Griggs A."/>
            <person name="Gujja S."/>
            <person name="Heilman E."/>
            <person name="Heiman D."/>
            <person name="Howarth C."/>
            <person name="Jen D."/>
            <person name="Larson L."/>
            <person name="Lui A."/>
            <person name="MacDonald J."/>
            <person name="Mehta T."/>
            <person name="Montmayeur A."/>
            <person name="Neiman D."/>
            <person name="Park D."/>
            <person name="Pearson M."/>
            <person name="Priest M."/>
            <person name="Richards J."/>
            <person name="Roberts A."/>
            <person name="Saif S."/>
            <person name="Shea T."/>
            <person name="Shenoy N."/>
            <person name="Sisk P."/>
            <person name="Stolte C."/>
            <person name="Sykes S."/>
            <person name="Walk T."/>
            <person name="White J."/>
            <person name="Yandava C."/>
            <person name="Haas B."/>
            <person name="Nusbaum C."/>
            <person name="Birren B."/>
        </authorList>
    </citation>
    <scope>NUCLEOTIDE SEQUENCE [LARGE SCALE GENOMIC DNA]</scope>
    <source>
        <strain>10403S</strain>
    </source>
</reference>
<sequence>MSKIIGIDLGTTNSAVAVLEGGEAKIIPNPEGARTTPSVVGFKNGERQVGEVAKRAAITNPNTISSIKRHMGTNYKETIEGKDYSPQEISAIILQYLKSYAEDYLGETVDKAVITVPAYFNDAQRQATKDAGKIAGLEVERIINEPTAAALAYGMDKTETDQTILVFDLGGGTFDVSILELGDGVFEVHSTAGDNELGGDDFDKKIIDYLVAEFKKDNGIDLSQDKMALQRLKDAAEKAKKDLSGVTSTQISLPFITAGEAGPLHLEVTLTRAKFDELTHDLVERTIAPTRQALKDANLSASDIDQVILVGGSTRIPAVQETIKKELGKEPHKGVNPDEVVAMGAAIQGGVITGDVKDVVLLDVTPLSLGIETMGGVMTTLIERNTTIPTSKSQTFSTAADNQPAVDIHVLQGERPMAKDNKTLGRFQLADIPPAPRGIPQIEVSFDIDKNGIVTVRAKDLGTGKEQNIVIKSSSGLTDEEIEKMVQDAEANAEEDKKNKENAELRNNADQLVFTVDKTLKELEGKVEEEEVKKAEAARDELQEALKGEDFDAIKEKTESLNEIVQNLSVKLYEQAAAEQQAAGGAEGQEAPQNDDVVDAEFEEVNDDDKENK</sequence>